<organism>
    <name type="scientific">Bos taurus</name>
    <name type="common">Bovine</name>
    <dbReference type="NCBI Taxonomy" id="9913"/>
    <lineage>
        <taxon>Eukaryota</taxon>
        <taxon>Metazoa</taxon>
        <taxon>Chordata</taxon>
        <taxon>Craniata</taxon>
        <taxon>Vertebrata</taxon>
        <taxon>Euteleostomi</taxon>
        <taxon>Mammalia</taxon>
        <taxon>Eutheria</taxon>
        <taxon>Laurasiatheria</taxon>
        <taxon>Artiodactyla</taxon>
        <taxon>Ruminantia</taxon>
        <taxon>Pecora</taxon>
        <taxon>Bovidae</taxon>
        <taxon>Bovinae</taxon>
        <taxon>Bos</taxon>
    </lineage>
</organism>
<dbReference type="EC" id="3.6.5.-" evidence="2"/>
<dbReference type="EMBL" id="BC103385">
    <property type="protein sequence ID" value="AAI03386.1"/>
    <property type="molecule type" value="mRNA"/>
</dbReference>
<dbReference type="RefSeq" id="NP_001068589.1">
    <property type="nucleotide sequence ID" value="NM_001075121.1"/>
</dbReference>
<dbReference type="SMR" id="Q3SYU2"/>
<dbReference type="BioGRID" id="158499">
    <property type="interactions" value="1"/>
</dbReference>
<dbReference type="FunCoup" id="Q3SYU2">
    <property type="interactions" value="3236"/>
</dbReference>
<dbReference type="IntAct" id="Q3SYU2">
    <property type="interactions" value="1"/>
</dbReference>
<dbReference type="STRING" id="9913.ENSBTAP00000005581"/>
<dbReference type="iPTMnet" id="Q3SYU2"/>
<dbReference type="PaxDb" id="9913-ENSBTAP00000005581"/>
<dbReference type="PeptideAtlas" id="Q3SYU2"/>
<dbReference type="Ensembl" id="ENSBTAT00000005581.4">
    <property type="protein sequence ID" value="ENSBTAP00000005581.3"/>
    <property type="gene ID" value="ENSBTAG00000004258.4"/>
</dbReference>
<dbReference type="GeneID" id="281138"/>
<dbReference type="KEGG" id="bta:281138"/>
<dbReference type="CTD" id="1938"/>
<dbReference type="VEuPathDB" id="HostDB:ENSBTAG00000004258"/>
<dbReference type="VGNC" id="VGNC:28335">
    <property type="gene designation" value="EEF2"/>
</dbReference>
<dbReference type="eggNOG" id="KOG0469">
    <property type="taxonomic scope" value="Eukaryota"/>
</dbReference>
<dbReference type="GeneTree" id="ENSGT00940000154662"/>
<dbReference type="HOGENOM" id="CLU_002794_11_1_1"/>
<dbReference type="InParanoid" id="Q3SYU2"/>
<dbReference type="OMA" id="ASWNTEN"/>
<dbReference type="OrthoDB" id="364892at2759"/>
<dbReference type="TreeFam" id="TF300575"/>
<dbReference type="Reactome" id="R-BTA-156902">
    <property type="pathway name" value="Peptide chain elongation"/>
</dbReference>
<dbReference type="Reactome" id="R-BTA-5358493">
    <property type="pathway name" value="Synthesis of diphthamide-EEF2"/>
</dbReference>
<dbReference type="Reactome" id="R-BTA-6798695">
    <property type="pathway name" value="Neutrophil degranulation"/>
</dbReference>
<dbReference type="Reactome" id="R-BTA-8876725">
    <property type="pathway name" value="Protein methylation"/>
</dbReference>
<dbReference type="Proteomes" id="UP000009136">
    <property type="component" value="Chromosome 7"/>
</dbReference>
<dbReference type="Bgee" id="ENSBTAG00000004258">
    <property type="expression patterns" value="Expressed in vas deferens and 109 other cell types or tissues"/>
</dbReference>
<dbReference type="GO" id="GO:0016235">
    <property type="term" value="C:aggresome"/>
    <property type="evidence" value="ECO:0007669"/>
    <property type="project" value="Ensembl"/>
</dbReference>
<dbReference type="GO" id="GO:0005737">
    <property type="term" value="C:cytoplasm"/>
    <property type="evidence" value="ECO:0000250"/>
    <property type="project" value="UniProtKB"/>
</dbReference>
<dbReference type="GO" id="GO:0005829">
    <property type="term" value="C:cytosol"/>
    <property type="evidence" value="ECO:0000318"/>
    <property type="project" value="GO_Central"/>
</dbReference>
<dbReference type="GO" id="GO:0005634">
    <property type="term" value="C:nucleus"/>
    <property type="evidence" value="ECO:0007669"/>
    <property type="project" value="UniProtKB-SubCell"/>
</dbReference>
<dbReference type="GO" id="GO:0005886">
    <property type="term" value="C:plasma membrane"/>
    <property type="evidence" value="ECO:0007669"/>
    <property type="project" value="Ensembl"/>
</dbReference>
<dbReference type="GO" id="GO:1990904">
    <property type="term" value="C:ribonucleoprotein complex"/>
    <property type="evidence" value="ECO:0000318"/>
    <property type="project" value="GO_Central"/>
</dbReference>
<dbReference type="GO" id="GO:0005840">
    <property type="term" value="C:ribosome"/>
    <property type="evidence" value="ECO:0007669"/>
    <property type="project" value="Ensembl"/>
</dbReference>
<dbReference type="GO" id="GO:0045202">
    <property type="term" value="C:synapse"/>
    <property type="evidence" value="ECO:0007669"/>
    <property type="project" value="Ensembl"/>
</dbReference>
<dbReference type="GO" id="GO:0005525">
    <property type="term" value="F:GTP binding"/>
    <property type="evidence" value="ECO:0007669"/>
    <property type="project" value="UniProtKB-KW"/>
</dbReference>
<dbReference type="GO" id="GO:0003924">
    <property type="term" value="F:GTPase activity"/>
    <property type="evidence" value="ECO:0000250"/>
    <property type="project" value="UniProtKB"/>
</dbReference>
<dbReference type="GO" id="GO:0106222">
    <property type="term" value="F:lncRNA binding"/>
    <property type="evidence" value="ECO:0007669"/>
    <property type="project" value="Ensembl"/>
</dbReference>
<dbReference type="GO" id="GO:0019901">
    <property type="term" value="F:protein kinase binding"/>
    <property type="evidence" value="ECO:0007669"/>
    <property type="project" value="Ensembl"/>
</dbReference>
<dbReference type="GO" id="GO:0043022">
    <property type="term" value="F:ribosome binding"/>
    <property type="evidence" value="ECO:0000318"/>
    <property type="project" value="GO_Central"/>
</dbReference>
<dbReference type="GO" id="GO:0003746">
    <property type="term" value="F:translation elongation factor activity"/>
    <property type="evidence" value="ECO:0000250"/>
    <property type="project" value="UniProtKB"/>
</dbReference>
<dbReference type="GO" id="GO:0002244">
    <property type="term" value="P:hematopoietic progenitor cell differentiation"/>
    <property type="evidence" value="ECO:0007669"/>
    <property type="project" value="Ensembl"/>
</dbReference>
<dbReference type="GO" id="GO:0045727">
    <property type="term" value="P:positive regulation of translation"/>
    <property type="evidence" value="ECO:0007669"/>
    <property type="project" value="Ensembl"/>
</dbReference>
<dbReference type="GO" id="GO:0006414">
    <property type="term" value="P:translational elongation"/>
    <property type="evidence" value="ECO:0000250"/>
    <property type="project" value="UniProtKB"/>
</dbReference>
<dbReference type="CDD" id="cd01681">
    <property type="entry name" value="aeEF2_snRNP_like_IV"/>
    <property type="match status" value="1"/>
</dbReference>
<dbReference type="CDD" id="cd04096">
    <property type="entry name" value="eEF2_snRNP_like_C"/>
    <property type="match status" value="1"/>
</dbReference>
<dbReference type="CDD" id="cd01885">
    <property type="entry name" value="EF2"/>
    <property type="match status" value="1"/>
</dbReference>
<dbReference type="CDD" id="cd16261">
    <property type="entry name" value="EF2_snRNP_III"/>
    <property type="match status" value="1"/>
</dbReference>
<dbReference type="CDD" id="cd03700">
    <property type="entry name" value="EF2_snRNP_like_II"/>
    <property type="match status" value="1"/>
</dbReference>
<dbReference type="FunFam" id="2.40.30.10:FF:000010">
    <property type="entry name" value="Translation elongation factor 2"/>
    <property type="match status" value="1"/>
</dbReference>
<dbReference type="FunFam" id="3.30.230.10:FF:000006">
    <property type="entry name" value="Translation elongation factor 2"/>
    <property type="match status" value="1"/>
</dbReference>
<dbReference type="FunFam" id="3.30.70.240:FF:000003">
    <property type="entry name" value="Translation elongation factor 2"/>
    <property type="match status" value="1"/>
</dbReference>
<dbReference type="FunFam" id="3.30.70.870:FF:000002">
    <property type="entry name" value="Translation elongation factor 2"/>
    <property type="match status" value="1"/>
</dbReference>
<dbReference type="FunFam" id="3.40.50.300:FF:000058">
    <property type="entry name" value="Translation elongation factor 2"/>
    <property type="match status" value="1"/>
</dbReference>
<dbReference type="Gene3D" id="3.30.230.10">
    <property type="match status" value="1"/>
</dbReference>
<dbReference type="Gene3D" id="3.30.70.240">
    <property type="match status" value="1"/>
</dbReference>
<dbReference type="Gene3D" id="3.30.70.870">
    <property type="entry name" value="Elongation Factor G (Translational Gtpase), domain 3"/>
    <property type="match status" value="1"/>
</dbReference>
<dbReference type="Gene3D" id="3.40.50.300">
    <property type="entry name" value="P-loop containing nucleotide triphosphate hydrolases"/>
    <property type="match status" value="1"/>
</dbReference>
<dbReference type="Gene3D" id="2.40.30.10">
    <property type="entry name" value="Translation factors"/>
    <property type="match status" value="1"/>
</dbReference>
<dbReference type="InterPro" id="IPR041095">
    <property type="entry name" value="EFG_II"/>
</dbReference>
<dbReference type="InterPro" id="IPR035647">
    <property type="entry name" value="EFG_III/V"/>
</dbReference>
<dbReference type="InterPro" id="IPR000640">
    <property type="entry name" value="EFG_V-like"/>
</dbReference>
<dbReference type="InterPro" id="IPR004161">
    <property type="entry name" value="EFTu-like_2"/>
</dbReference>
<dbReference type="InterPro" id="IPR031157">
    <property type="entry name" value="G_TR_CS"/>
</dbReference>
<dbReference type="InterPro" id="IPR027417">
    <property type="entry name" value="P-loop_NTPase"/>
</dbReference>
<dbReference type="InterPro" id="IPR020568">
    <property type="entry name" value="Ribosomal_Su5_D2-typ_SF"/>
</dbReference>
<dbReference type="InterPro" id="IPR014721">
    <property type="entry name" value="Ribsml_uS5_D2-typ_fold_subgr"/>
</dbReference>
<dbReference type="InterPro" id="IPR005225">
    <property type="entry name" value="Small_GTP-bd"/>
</dbReference>
<dbReference type="InterPro" id="IPR000795">
    <property type="entry name" value="T_Tr_GTP-bd_dom"/>
</dbReference>
<dbReference type="InterPro" id="IPR009000">
    <property type="entry name" value="Transl_B-barrel_sf"/>
</dbReference>
<dbReference type="InterPro" id="IPR005517">
    <property type="entry name" value="Transl_elong_EFG/EF2_IV"/>
</dbReference>
<dbReference type="NCBIfam" id="TIGR00231">
    <property type="entry name" value="small_GTP"/>
    <property type="match status" value="1"/>
</dbReference>
<dbReference type="PANTHER" id="PTHR42908:SF35">
    <property type="entry name" value="ELONGATION FACTOR 2"/>
    <property type="match status" value="1"/>
</dbReference>
<dbReference type="PANTHER" id="PTHR42908">
    <property type="entry name" value="TRANSLATION ELONGATION FACTOR-RELATED"/>
    <property type="match status" value="1"/>
</dbReference>
<dbReference type="Pfam" id="PF00679">
    <property type="entry name" value="EFG_C"/>
    <property type="match status" value="1"/>
</dbReference>
<dbReference type="Pfam" id="PF14492">
    <property type="entry name" value="EFG_III"/>
    <property type="match status" value="1"/>
</dbReference>
<dbReference type="Pfam" id="PF03764">
    <property type="entry name" value="EFG_IV"/>
    <property type="match status" value="1"/>
</dbReference>
<dbReference type="Pfam" id="PF00009">
    <property type="entry name" value="GTP_EFTU"/>
    <property type="match status" value="1"/>
</dbReference>
<dbReference type="Pfam" id="PF03144">
    <property type="entry name" value="GTP_EFTU_D2"/>
    <property type="match status" value="1"/>
</dbReference>
<dbReference type="PRINTS" id="PR00315">
    <property type="entry name" value="ELONGATNFCT"/>
</dbReference>
<dbReference type="SMART" id="SM00838">
    <property type="entry name" value="EFG_C"/>
    <property type="match status" value="1"/>
</dbReference>
<dbReference type="SMART" id="SM00889">
    <property type="entry name" value="EFG_IV"/>
    <property type="match status" value="1"/>
</dbReference>
<dbReference type="SUPFAM" id="SSF54980">
    <property type="entry name" value="EF-G C-terminal domain-like"/>
    <property type="match status" value="2"/>
</dbReference>
<dbReference type="SUPFAM" id="SSF52540">
    <property type="entry name" value="P-loop containing nucleoside triphosphate hydrolases"/>
    <property type="match status" value="1"/>
</dbReference>
<dbReference type="SUPFAM" id="SSF54211">
    <property type="entry name" value="Ribosomal protein S5 domain 2-like"/>
    <property type="match status" value="1"/>
</dbReference>
<dbReference type="SUPFAM" id="SSF50447">
    <property type="entry name" value="Translation proteins"/>
    <property type="match status" value="1"/>
</dbReference>
<dbReference type="PROSITE" id="PS00301">
    <property type="entry name" value="G_TR_1"/>
    <property type="match status" value="1"/>
</dbReference>
<dbReference type="PROSITE" id="PS51722">
    <property type="entry name" value="G_TR_2"/>
    <property type="match status" value="1"/>
</dbReference>
<proteinExistence type="evidence at transcript level"/>
<feature type="chain" id="PRO_0000223486" description="Elongation factor 2">
    <location>
        <begin position="1"/>
        <end position="858"/>
    </location>
</feature>
<feature type="domain" description="tr-type G" evidence="6">
    <location>
        <begin position="17"/>
        <end position="362"/>
    </location>
</feature>
<feature type="binding site" evidence="3">
    <location>
        <begin position="26"/>
        <end position="33"/>
    </location>
    <ligand>
        <name>GTP</name>
        <dbReference type="ChEBI" id="CHEBI:37565"/>
    </ligand>
</feature>
<feature type="binding site" evidence="3">
    <location>
        <begin position="158"/>
        <end position="161"/>
    </location>
    <ligand>
        <name>GTP</name>
        <dbReference type="ChEBI" id="CHEBI:37565"/>
    </ligand>
</feature>
<feature type="binding site" evidence="3">
    <location>
        <begin position="216"/>
        <end position="218"/>
    </location>
    <ligand>
        <name>GTP</name>
        <dbReference type="ChEBI" id="CHEBI:37565"/>
    </ligand>
</feature>
<feature type="site" description="Cleavage" evidence="2">
    <location>
        <begin position="586"/>
        <end position="587"/>
    </location>
</feature>
<feature type="site" description="Cleavage" evidence="2">
    <location>
        <begin position="605"/>
        <end position="606"/>
    </location>
</feature>
<feature type="modified residue" description="Phosphothreonine" evidence="2">
    <location>
        <position position="54"/>
    </location>
</feature>
<feature type="modified residue" description="Phosphothreonine; by EEF2K" evidence="2">
    <location>
        <position position="57"/>
    </location>
</feature>
<feature type="modified residue" description="Phosphothreonine" evidence="2">
    <location>
        <position position="59"/>
    </location>
</feature>
<feature type="modified residue" description="N6-succinyllysine" evidence="4">
    <location>
        <position position="152"/>
    </location>
</feature>
<feature type="modified residue" description="N6-acetyllysine" evidence="2">
    <location>
        <position position="235"/>
    </location>
</feature>
<feature type="modified residue" description="N6-acetyllysine; alternate" evidence="2">
    <location>
        <position position="239"/>
    </location>
</feature>
<feature type="modified residue" description="Phosphotyrosine; by CSK" evidence="2">
    <location>
        <position position="265"/>
    </location>
</feature>
<feature type="modified residue" description="N6-acetyllysine; alternate" evidence="2">
    <location>
        <position position="272"/>
    </location>
</feature>
<feature type="modified residue" description="N6-succinyllysine; alternate" evidence="4">
    <location>
        <position position="272"/>
    </location>
</feature>
<feature type="modified residue" description="N6-acetyllysine" evidence="2">
    <location>
        <position position="275"/>
    </location>
</feature>
<feature type="modified residue" description="Phosphoserine" evidence="1">
    <location>
        <position position="325"/>
    </location>
</feature>
<feature type="modified residue" description="Phosphotyrosine; by CSK" evidence="2">
    <location>
        <position position="373"/>
    </location>
</feature>
<feature type="modified residue" description="Phosphothreonine" evidence="2">
    <location>
        <position position="435"/>
    </location>
</feature>
<feature type="modified residue" description="N6-acetyllysine" evidence="4">
    <location>
        <position position="439"/>
    </location>
</feature>
<feature type="modified residue" description="N6-acetyllysine" evidence="2">
    <location>
        <position position="445"/>
    </location>
</feature>
<feature type="modified residue" description="Phosphoserine" evidence="2">
    <location>
        <position position="502"/>
    </location>
</feature>
<feature type="modified residue" description="N6,N6,N6-trimethyllysine; by EEF2KMT" evidence="2">
    <location>
        <position position="525"/>
    </location>
</feature>
<feature type="modified residue" description="N6-succinyllysine" evidence="4">
    <location>
        <position position="572"/>
    </location>
</feature>
<feature type="modified residue" description="Phosphoserine; by CDK2" evidence="2">
    <location>
        <position position="595"/>
    </location>
</feature>
<feature type="modified residue" description="N6-acetyllysine" evidence="4">
    <location>
        <position position="619"/>
    </location>
</feature>
<feature type="modified residue" description="Diphthamide" evidence="1">
    <location>
        <position position="715"/>
    </location>
</feature>
<feature type="cross-link" description="Glycyl lysine isopeptide (Lys-Gly) (interchain with G-Cter in SUMO1); alternate" evidence="2">
    <location>
        <position position="239"/>
    </location>
</feature>
<feature type="cross-link" description="Glycyl lysine isopeptide (Lys-Gly) (interchain with G-Cter in SUMO)" evidence="2">
    <location>
        <position position="322"/>
    </location>
</feature>
<feature type="cross-link" description="Glycyl lysine isopeptide (Lys-Gly) (interchain with G-Cter in SUMO)" evidence="2">
    <location>
        <position position="529"/>
    </location>
</feature>
<reference key="1">
    <citation type="submission" date="2005-08" db="EMBL/GenBank/DDBJ databases">
        <authorList>
            <consortium name="NIH - Mammalian Gene Collection (MGC) project"/>
        </authorList>
    </citation>
    <scope>NUCLEOTIDE SEQUENCE [LARGE SCALE MRNA]</scope>
    <source>
        <strain>Crossbred X Angus</strain>
        <tissue>Ileum</tissue>
    </source>
</reference>
<protein>
    <recommendedName>
        <fullName>Elongation factor 2</fullName>
        <shortName>EF-2</shortName>
        <ecNumber evidence="2">3.6.5.-</ecNumber>
    </recommendedName>
</protein>
<comment type="function">
    <text evidence="2">Catalyzes the GTP-dependent ribosomal translocation step during translation elongation. During this step, the ribosome changes from the pre-translocational (PRE) to the post-translocational (POST) state as the newly formed A-site-bound peptidyl-tRNA and P-site-bound deacylated tRNA move to the P and E sites, respectively. Catalyzes the coordinated movement of the two tRNA molecules, the mRNA and conformational changes in the ribosome.</text>
</comment>
<comment type="catalytic activity">
    <reaction evidence="2">
        <text>GTP + H2O = GDP + phosphate + H(+)</text>
        <dbReference type="Rhea" id="RHEA:19669"/>
        <dbReference type="ChEBI" id="CHEBI:15377"/>
        <dbReference type="ChEBI" id="CHEBI:15378"/>
        <dbReference type="ChEBI" id="CHEBI:37565"/>
        <dbReference type="ChEBI" id="CHEBI:43474"/>
        <dbReference type="ChEBI" id="CHEBI:58189"/>
    </reaction>
    <physiologicalReaction direction="left-to-right" evidence="2">
        <dbReference type="Rhea" id="RHEA:19670"/>
    </physiologicalReaction>
</comment>
<comment type="subunit">
    <text evidence="2 5">Binds to 80S ribosomes. Actively translating ribosomes show mutually exclusive binding of eIF5a (EIF5A or EIF5A2) and EEF2/eEF2. Interacts with SERBP1; interaction sequesters EEF2/eEF2 at the A-site of the ribosome, thereby blocking the interaction sites of the mRNA-tRNA complex, promoting ribosome stabilization and hibernation (By similarity). Interacts with HABP4; interaction takes place at the A-site of hibernating ribosomes and promotes ribosome stabilization (By similarity). Component of the mRNA surveillance SURF complex, at least composed of ERF1, ERF3 (ERF3A or ERF3B), EEF2, UPF1/RENT1, SMG1, SMG8 and SMG9. Interacts with RBPMS2 (By similarity).</text>
</comment>
<comment type="subcellular location">
    <subcellularLocation>
        <location evidence="2">Cytoplasm</location>
    </subcellularLocation>
    <subcellularLocation>
        <location evidence="2">Nucleus</location>
    </subcellularLocation>
    <text evidence="2">Phosphorylation by CSK promotes cleavage and SUMOylation-dependent nuclear translocation of the C-terminal cleavage product.</text>
</comment>
<comment type="PTM">
    <text evidence="2">Phosphorylation by EF-2 kinase completely inactivates EF-2; it requires prior phosphorylation by CDK2 at Ser-595 during mitotic prometaphase. Phosphorylation by CSK promotes SUMOylation, proteolytic cleavage, and nuclear translocation if the C-terminal fragment.</text>
</comment>
<comment type="PTM">
    <text evidence="1">Diphthamide is 2-[3-carboxyamido-3-(trimethyl-ammonio)propyl]histidine (By similarity).</text>
</comment>
<comment type="PTM">
    <text evidence="2">ISGylated.</text>
</comment>
<comment type="PTM">
    <text evidence="2">Proteolytically processed at two sites following phosphorylation by CSK.</text>
</comment>
<comment type="PTM">
    <text evidence="2">SUMOylated following phosphorylation by CSK, promotes proteolytic cleavage.</text>
</comment>
<comment type="similarity">
    <text evidence="6">Belongs to the TRAFAC class translation factor GTPase superfamily. Classic translation factor GTPase family. EF-G/EF-2 subfamily.</text>
</comment>
<accession>Q3SYU2</accession>
<name>EF2_BOVIN</name>
<keyword id="KW-0007">Acetylation</keyword>
<keyword id="KW-0963">Cytoplasm</keyword>
<keyword id="KW-0251">Elongation factor</keyword>
<keyword id="KW-0342">GTP-binding</keyword>
<keyword id="KW-0378">Hydrolase</keyword>
<keyword id="KW-1017">Isopeptide bond</keyword>
<keyword id="KW-0488">Methylation</keyword>
<keyword id="KW-0547">Nucleotide-binding</keyword>
<keyword id="KW-0539">Nucleus</keyword>
<keyword id="KW-0597">Phosphoprotein</keyword>
<keyword id="KW-0648">Protein biosynthesis</keyword>
<keyword id="KW-1185">Reference proteome</keyword>
<keyword id="KW-0832">Ubl conjugation</keyword>
<gene>
    <name type="primary">EEF2</name>
</gene>
<evidence type="ECO:0000250" key="1">
    <source>
        <dbReference type="UniProtKB" id="P05197"/>
    </source>
</evidence>
<evidence type="ECO:0000250" key="2">
    <source>
        <dbReference type="UniProtKB" id="P13639"/>
    </source>
</evidence>
<evidence type="ECO:0000250" key="3">
    <source>
        <dbReference type="UniProtKB" id="P32324"/>
    </source>
</evidence>
<evidence type="ECO:0000250" key="4">
    <source>
        <dbReference type="UniProtKB" id="P58252"/>
    </source>
</evidence>
<evidence type="ECO:0000250" key="5">
    <source>
        <dbReference type="UniProtKB" id="Q7ZXP8"/>
    </source>
</evidence>
<evidence type="ECO:0000255" key="6">
    <source>
        <dbReference type="PROSITE-ProRule" id="PRU01059"/>
    </source>
</evidence>
<sequence>MVNFTVDQIRAIMDKKANIRNMSVIAHVDHGKSTLTDSLVCKAGIIASARAGETRFTDTRKDEQERCITIKSTAISLFYELSENDLNFIKQSKDGSGFLINLIDSPGHVDFSSEVTAALRVTDGALVVVDCVSGVCVQTETVLRQAIAERIKPVLMMNKMDRALLELQLEPEELYQTFQRIVENVNVIISTYGEGESGPMGNIMIDPVLGTVGFGSGLHGWAFTLKQFAEMYVAKFAAKGEGQLGPAERAKKVEDMMKKLWGDRYFDPATGKFSKSANSPDGKKLPRTFCQLILDPIFKVFDAIMNFKKEETAKLIEKLDIKLDSEDKDKEGKPLLKAVMRRWLPAGDALLQMITIHLPSPVTAQKYRCELLYEGPPDDEAAMGIKSCDPKGPLMMYISKMVPTSDKGRFYAFGRVFSGLVSTGLKVRIMGPNYTPGKKEDLYLKPIQRTILMMGRYVEPIEDVPCGNIVGLVGVDQFLVKTGTITTFEHAHNMRVMKFSVSPVVRVAVEAKNPADLPKLVEGLKRLAKSDPMVQCIIEESGEHIIAGAGELHLEICLKDLEEDHACIPIKKSDPVVSYRETVSEESNVLCLSKSPNKHNRLYMKARPFPDGLAEDIDKGEVSARQELKQRARYLAEKYEWDVAEARKIWCFGPDGTGPNILTDITKGVQYLNEIKDSVVAGFQWATKEGALCEENMRGVRFDVHDVTLHADAIHRGGGQIIPTARRCLYASVLTAQPRLMEPIYLVEIQCPEQVVGGIYGVLNRKRGHVFEETQVAGTPMFVVKAYLPVNESFGFTADLRSNTGGQAFPQCVFDHWQILPGDPFDNTSRPSQVVAETRKRKGLKEGIPALDNFLDKL</sequence>